<sequence>MLSPKRTRFRKQHRGRMKGMSYRGSHICFGRYALQALEPSWITSRQIEAGRRAMTRYARRGGKIWVRIFPDKPVTIRPAETRMGSGKGSPEYWVSVVKPGRILYEMGGVSETVARAAIEIAASKMPIRTQFIIAG</sequence>
<accession>Q3V4Z6</accession>
<gene>
    <name evidence="1" type="primary">rpl16</name>
</gene>
<geneLocation type="chloroplast"/>
<dbReference type="EMBL" id="AJ879453">
    <property type="protein sequence ID" value="CAI53832.1"/>
    <property type="molecule type" value="Genomic_DNA"/>
</dbReference>
<dbReference type="RefSeq" id="YP_319801.1">
    <property type="nucleotide sequence ID" value="NC_007407.1"/>
</dbReference>
<dbReference type="SMR" id="Q3V4Z6"/>
<dbReference type="GeneID" id="3677478"/>
<dbReference type="GO" id="GO:0009507">
    <property type="term" value="C:chloroplast"/>
    <property type="evidence" value="ECO:0007669"/>
    <property type="project" value="UniProtKB-SubCell"/>
</dbReference>
<dbReference type="GO" id="GO:0005762">
    <property type="term" value="C:mitochondrial large ribosomal subunit"/>
    <property type="evidence" value="ECO:0007669"/>
    <property type="project" value="TreeGrafter"/>
</dbReference>
<dbReference type="GO" id="GO:0019843">
    <property type="term" value="F:rRNA binding"/>
    <property type="evidence" value="ECO:0007669"/>
    <property type="project" value="InterPro"/>
</dbReference>
<dbReference type="GO" id="GO:0003735">
    <property type="term" value="F:structural constituent of ribosome"/>
    <property type="evidence" value="ECO:0007669"/>
    <property type="project" value="InterPro"/>
</dbReference>
<dbReference type="GO" id="GO:0032543">
    <property type="term" value="P:mitochondrial translation"/>
    <property type="evidence" value="ECO:0007669"/>
    <property type="project" value="TreeGrafter"/>
</dbReference>
<dbReference type="CDD" id="cd01433">
    <property type="entry name" value="Ribosomal_L16_L10e"/>
    <property type="match status" value="1"/>
</dbReference>
<dbReference type="FunFam" id="3.90.1170.10:FF:000001">
    <property type="entry name" value="50S ribosomal protein L16"/>
    <property type="match status" value="1"/>
</dbReference>
<dbReference type="Gene3D" id="3.90.1170.10">
    <property type="entry name" value="Ribosomal protein L10e/L16"/>
    <property type="match status" value="1"/>
</dbReference>
<dbReference type="HAMAP" id="MF_01342">
    <property type="entry name" value="Ribosomal_uL16"/>
    <property type="match status" value="1"/>
</dbReference>
<dbReference type="InterPro" id="IPR047873">
    <property type="entry name" value="Ribosomal_uL16"/>
</dbReference>
<dbReference type="InterPro" id="IPR000114">
    <property type="entry name" value="Ribosomal_uL16_bact-type"/>
</dbReference>
<dbReference type="InterPro" id="IPR020798">
    <property type="entry name" value="Ribosomal_uL16_CS"/>
</dbReference>
<dbReference type="InterPro" id="IPR016180">
    <property type="entry name" value="Ribosomal_uL16_dom"/>
</dbReference>
<dbReference type="InterPro" id="IPR036920">
    <property type="entry name" value="Ribosomal_uL16_sf"/>
</dbReference>
<dbReference type="NCBIfam" id="TIGR01164">
    <property type="entry name" value="rplP_bact"/>
    <property type="match status" value="1"/>
</dbReference>
<dbReference type="PANTHER" id="PTHR12220">
    <property type="entry name" value="50S/60S RIBOSOMAL PROTEIN L16"/>
    <property type="match status" value="1"/>
</dbReference>
<dbReference type="PANTHER" id="PTHR12220:SF13">
    <property type="entry name" value="LARGE RIBOSOMAL SUBUNIT PROTEIN UL16M"/>
    <property type="match status" value="1"/>
</dbReference>
<dbReference type="Pfam" id="PF00252">
    <property type="entry name" value="Ribosomal_L16"/>
    <property type="match status" value="1"/>
</dbReference>
<dbReference type="PRINTS" id="PR00060">
    <property type="entry name" value="RIBOSOMALL16"/>
</dbReference>
<dbReference type="SUPFAM" id="SSF54686">
    <property type="entry name" value="Ribosomal protein L16p/L10e"/>
    <property type="match status" value="1"/>
</dbReference>
<dbReference type="PROSITE" id="PS00586">
    <property type="entry name" value="RIBOSOMAL_L16_1"/>
    <property type="match status" value="1"/>
</dbReference>
<dbReference type="PROSITE" id="PS00701">
    <property type="entry name" value="RIBOSOMAL_L16_2"/>
    <property type="match status" value="1"/>
</dbReference>
<organism>
    <name type="scientific">Acorus calamus</name>
    <name type="common">Sweet flag</name>
    <dbReference type="NCBI Taxonomy" id="4465"/>
    <lineage>
        <taxon>Eukaryota</taxon>
        <taxon>Viridiplantae</taxon>
        <taxon>Streptophyta</taxon>
        <taxon>Embryophyta</taxon>
        <taxon>Tracheophyta</taxon>
        <taxon>Spermatophyta</taxon>
        <taxon>Magnoliopsida</taxon>
        <taxon>Liliopsida</taxon>
        <taxon>Acoraceae</taxon>
        <taxon>Acorus</taxon>
    </lineage>
</organism>
<proteinExistence type="inferred from homology"/>
<name>RK16_ACOCL</name>
<protein>
    <recommendedName>
        <fullName evidence="1">Large ribosomal subunit protein uL16c</fullName>
    </recommendedName>
    <alternativeName>
        <fullName evidence="2">50S ribosomal protein L16, chloroplastic</fullName>
    </alternativeName>
</protein>
<keyword id="KW-0150">Chloroplast</keyword>
<keyword id="KW-0934">Plastid</keyword>
<keyword id="KW-0687">Ribonucleoprotein</keyword>
<keyword id="KW-0689">Ribosomal protein</keyword>
<comment type="subunit">
    <text evidence="1">Part of the 50S ribosomal subunit.</text>
</comment>
<comment type="subcellular location">
    <subcellularLocation>
        <location>Plastid</location>
        <location>Chloroplast</location>
    </subcellularLocation>
</comment>
<comment type="similarity">
    <text evidence="1">Belongs to the universal ribosomal protein uL16 family.</text>
</comment>
<reference key="1">
    <citation type="journal article" date="2005" name="Mol. Biol. Evol.">
        <title>Analysis of Acorus calamus chloroplast genome and its phylogenetic implications.</title>
        <authorList>
            <person name="Goremykin V.V."/>
            <person name="Holland B."/>
            <person name="Hirsch-Ernst K.I."/>
            <person name="Hellwig F.H."/>
        </authorList>
    </citation>
    <scope>NUCLEOTIDE SEQUENCE [LARGE SCALE GENOMIC DNA]</scope>
</reference>
<evidence type="ECO:0000255" key="1">
    <source>
        <dbReference type="HAMAP-Rule" id="MF_01342"/>
    </source>
</evidence>
<evidence type="ECO:0000305" key="2"/>
<feature type="chain" id="PRO_0000062264" description="Large ribosomal subunit protein uL16c">
    <location>
        <begin position="1"/>
        <end position="135"/>
    </location>
</feature>